<dbReference type="EMBL" id="AL929348">
    <property type="status" value="NOT_ANNOTATED_CDS"/>
    <property type="molecule type" value="Genomic_DNA"/>
</dbReference>
<dbReference type="EMBL" id="AL672250">
    <property type="status" value="NOT_ANNOTATED_CDS"/>
    <property type="molecule type" value="Genomic_DNA"/>
</dbReference>
<dbReference type="EMBL" id="AL691423">
    <property type="status" value="NOT_ANNOTATED_CDS"/>
    <property type="molecule type" value="Genomic_DNA"/>
</dbReference>
<dbReference type="EMBL" id="AL732316">
    <property type="status" value="NOT_ANNOTATED_CDS"/>
    <property type="molecule type" value="Genomic_DNA"/>
</dbReference>
<dbReference type="EMBL" id="BX649564">
    <property type="status" value="NOT_ANNOTATED_CDS"/>
    <property type="molecule type" value="Genomic_DNA"/>
</dbReference>
<dbReference type="EMBL" id="D84237">
    <property type="protein sequence ID" value="BAA12286.1"/>
    <property type="molecule type" value="mRNA"/>
</dbReference>
<dbReference type="EMBL" id="AF111166">
    <property type="protein sequence ID" value="AAF21940.1"/>
    <property type="molecule type" value="mRNA"/>
</dbReference>
<dbReference type="EMBL" id="AK132464">
    <property type="protein sequence ID" value="BAE21181.1"/>
    <property type="molecule type" value="mRNA"/>
</dbReference>
<dbReference type="EMBL" id="X83934">
    <property type="protein sequence ID" value="CAA58786.1"/>
    <property type="molecule type" value="mRNA"/>
</dbReference>
<dbReference type="EMBL" id="U23756">
    <property type="protein sequence ID" value="AAA64957.1"/>
    <property type="molecule type" value="mRNA"/>
</dbReference>
<dbReference type="EMBL" id="D38218">
    <property type="protein sequence ID" value="BAA07393.1"/>
    <property type="molecule type" value="mRNA"/>
</dbReference>
<dbReference type="PIR" id="I48743">
    <property type="entry name" value="I48743"/>
</dbReference>
<dbReference type="PIR" id="S56107">
    <property type="entry name" value="S56107"/>
</dbReference>
<dbReference type="RefSeq" id="XP_017172194.1">
    <molecule id="A2AGL3-1"/>
    <property type="nucleotide sequence ID" value="XM_017316705.3"/>
</dbReference>
<dbReference type="SMR" id="A2AGL3"/>
<dbReference type="ComplexPortal" id="CPX-3161">
    <property type="entry name" value="Ryanodine 3 complex"/>
</dbReference>
<dbReference type="FunCoup" id="A2AGL3">
    <property type="interactions" value="945"/>
</dbReference>
<dbReference type="IntAct" id="A2AGL3">
    <property type="interactions" value="1"/>
</dbReference>
<dbReference type="MINT" id="A2AGL3"/>
<dbReference type="STRING" id="10090.ENSMUSP00000147250"/>
<dbReference type="BindingDB" id="A2AGL3"/>
<dbReference type="ChEMBL" id="CHEMBL2365"/>
<dbReference type="iPTMnet" id="A2AGL3"/>
<dbReference type="PhosphoSitePlus" id="A2AGL3"/>
<dbReference type="SwissPalm" id="A2AGL3"/>
<dbReference type="jPOST" id="A2AGL3"/>
<dbReference type="PaxDb" id="10090-ENSMUSP00000089426"/>
<dbReference type="PeptideAtlas" id="A2AGL3"/>
<dbReference type="ProteomicsDB" id="256855">
    <molecule id="A2AGL3-1"/>
</dbReference>
<dbReference type="ProteomicsDB" id="256856">
    <molecule id="A2AGL3-2"/>
</dbReference>
<dbReference type="Antibodypedia" id="41923">
    <property type="antibodies" value="41 antibodies from 16 providers"/>
</dbReference>
<dbReference type="DNASU" id="20192"/>
<dbReference type="Ensembl" id="ENSMUST00000080673.13">
    <molecule id="A2AGL3-1"/>
    <property type="protein sequence ID" value="ENSMUSP00000079503.6"/>
    <property type="gene ID" value="ENSMUSG00000057378.16"/>
</dbReference>
<dbReference type="Ensembl" id="ENSMUST00000208151.2">
    <molecule id="A2AGL3-2"/>
    <property type="protein sequence ID" value="ENSMUSP00000146449.2"/>
    <property type="gene ID" value="ENSMUSG00000057378.16"/>
</dbReference>
<dbReference type="GeneID" id="20192"/>
<dbReference type="AGR" id="MGI:99684"/>
<dbReference type="CTD" id="6263"/>
<dbReference type="MGI" id="MGI:99684">
    <property type="gene designation" value="Ryr3"/>
</dbReference>
<dbReference type="VEuPathDB" id="HostDB:ENSMUSG00000057378"/>
<dbReference type="eggNOG" id="KOG2243">
    <property type="taxonomic scope" value="Eukaryota"/>
</dbReference>
<dbReference type="GeneTree" id="ENSGT00940000155507"/>
<dbReference type="HOGENOM" id="CLU_000040_2_0_1"/>
<dbReference type="InParanoid" id="A2AGL3"/>
<dbReference type="PhylomeDB" id="A2AGL3"/>
<dbReference type="Reactome" id="R-MMU-2672351">
    <property type="pathway name" value="Stimuli-sensing channels"/>
</dbReference>
<dbReference type="Reactome" id="R-MMU-5578775">
    <property type="pathway name" value="Ion homeostasis"/>
</dbReference>
<dbReference type="BioGRID-ORCS" id="20192">
    <property type="hits" value="1 hit in 61 CRISPR screens"/>
</dbReference>
<dbReference type="CD-CODE" id="CE726F99">
    <property type="entry name" value="Postsynaptic density"/>
</dbReference>
<dbReference type="ChiTaRS" id="Ryr3">
    <property type="organism name" value="mouse"/>
</dbReference>
<dbReference type="PRO" id="PR:A2AGL3"/>
<dbReference type="Proteomes" id="UP000000589">
    <property type="component" value="Chromosome 2"/>
</dbReference>
<dbReference type="RNAct" id="A2AGL3">
    <property type="molecule type" value="protein"/>
</dbReference>
<dbReference type="Bgee" id="ENSMUSG00000057378">
    <property type="expression patterns" value="Expressed in caudate-putamen and 150 other cell types or tissues"/>
</dbReference>
<dbReference type="ExpressionAtlas" id="A2AGL3">
    <property type="expression patterns" value="baseline and differential"/>
</dbReference>
<dbReference type="GO" id="GO:0030314">
    <property type="term" value="C:junctional membrane complex"/>
    <property type="evidence" value="ECO:0000314"/>
    <property type="project" value="MGI"/>
</dbReference>
<dbReference type="GO" id="GO:0016020">
    <property type="term" value="C:membrane"/>
    <property type="evidence" value="ECO:0000250"/>
    <property type="project" value="UniProtKB"/>
</dbReference>
<dbReference type="GO" id="GO:0033017">
    <property type="term" value="C:sarcoplasmic reticulum membrane"/>
    <property type="evidence" value="ECO:0000314"/>
    <property type="project" value="MGI"/>
</dbReference>
<dbReference type="GO" id="GO:0005509">
    <property type="term" value="F:calcium ion binding"/>
    <property type="evidence" value="ECO:0007669"/>
    <property type="project" value="InterPro"/>
</dbReference>
<dbReference type="GO" id="GO:0005516">
    <property type="term" value="F:calmodulin binding"/>
    <property type="evidence" value="ECO:0007669"/>
    <property type="project" value="UniProtKB-KW"/>
</dbReference>
<dbReference type="GO" id="GO:0005219">
    <property type="term" value="F:ryanodine-sensitive calcium-release channel activity"/>
    <property type="evidence" value="ECO:0000314"/>
    <property type="project" value="UniProtKB"/>
</dbReference>
<dbReference type="GO" id="GO:0070588">
    <property type="term" value="P:calcium ion transmembrane transport"/>
    <property type="evidence" value="ECO:0000250"/>
    <property type="project" value="UniProtKB"/>
</dbReference>
<dbReference type="GO" id="GO:0071318">
    <property type="term" value="P:cellular response to ATP"/>
    <property type="evidence" value="ECO:0000250"/>
    <property type="project" value="UniProtKB"/>
</dbReference>
<dbReference type="GO" id="GO:0071313">
    <property type="term" value="P:cellular response to caffeine"/>
    <property type="evidence" value="ECO:0000250"/>
    <property type="project" value="UniProtKB"/>
</dbReference>
<dbReference type="GO" id="GO:0071277">
    <property type="term" value="P:cellular response to calcium ion"/>
    <property type="evidence" value="ECO:0000250"/>
    <property type="project" value="UniProtKB"/>
</dbReference>
<dbReference type="GO" id="GO:0071286">
    <property type="term" value="P:cellular response to magnesium ion"/>
    <property type="evidence" value="ECO:0000250"/>
    <property type="project" value="UniProtKB"/>
</dbReference>
<dbReference type="GO" id="GO:0006874">
    <property type="term" value="P:intracellular calcium ion homeostasis"/>
    <property type="evidence" value="ECO:0000315"/>
    <property type="project" value="MGI"/>
</dbReference>
<dbReference type="GO" id="GO:0051289">
    <property type="term" value="P:protein homotetramerization"/>
    <property type="evidence" value="ECO:0000250"/>
    <property type="project" value="UniProtKB"/>
</dbReference>
<dbReference type="GO" id="GO:0006941">
    <property type="term" value="P:striated muscle contraction"/>
    <property type="evidence" value="ECO:0000315"/>
    <property type="project" value="MGI"/>
</dbReference>
<dbReference type="CDD" id="cd23292">
    <property type="entry name" value="beta-trefoil_MIR_RyR3"/>
    <property type="match status" value="1"/>
</dbReference>
<dbReference type="CDD" id="cd12877">
    <property type="entry name" value="SPRY1_RyR"/>
    <property type="match status" value="1"/>
</dbReference>
<dbReference type="CDD" id="cd12878">
    <property type="entry name" value="SPRY2_RyR"/>
    <property type="match status" value="1"/>
</dbReference>
<dbReference type="CDD" id="cd12879">
    <property type="entry name" value="SPRY3_RyR"/>
    <property type="match status" value="1"/>
</dbReference>
<dbReference type="FunFam" id="2.80.10.50:FF:000009">
    <property type="entry name" value="Ryanodine receptor 1 (skeletal)"/>
    <property type="match status" value="1"/>
</dbReference>
<dbReference type="FunFam" id="1.10.238.10:FF:000040">
    <property type="entry name" value="Ryanodine receptor 2"/>
    <property type="match status" value="1"/>
</dbReference>
<dbReference type="FunFam" id="1.10.490.160:FF:000001">
    <property type="entry name" value="Ryanodine receptor 2 (Cardiac)"/>
    <property type="match status" value="1"/>
</dbReference>
<dbReference type="FunFam" id="2.80.10.50:FF:000006">
    <property type="entry name" value="Ryanodine receptor 2 (Cardiac)"/>
    <property type="match status" value="1"/>
</dbReference>
<dbReference type="FunFam" id="2.60.120.920:FF:000024">
    <property type="entry name" value="Ryanodine receptor 3"/>
    <property type="match status" value="1"/>
</dbReference>
<dbReference type="FunFam" id="1.10.287.70:FF:000017">
    <property type="entry name" value="ryanodine receptor isoform X2"/>
    <property type="match status" value="1"/>
</dbReference>
<dbReference type="FunFam" id="1.25.10.30:FF:000002">
    <property type="entry name" value="ryanodine receptor isoform X2"/>
    <property type="match status" value="1"/>
</dbReference>
<dbReference type="FunFam" id="2.60.120.920:FF:000002">
    <property type="entry name" value="ryanodine receptor isoform X2"/>
    <property type="match status" value="1"/>
</dbReference>
<dbReference type="FunFam" id="2.60.120.920:FF:000003">
    <property type="entry name" value="ryanodine receptor isoform X2"/>
    <property type="match status" value="1"/>
</dbReference>
<dbReference type="Gene3D" id="1.10.287.70">
    <property type="match status" value="1"/>
</dbReference>
<dbReference type="Gene3D" id="1.10.490.160">
    <property type="match status" value="2"/>
</dbReference>
<dbReference type="Gene3D" id="2.60.120.920">
    <property type="match status" value="3"/>
</dbReference>
<dbReference type="Gene3D" id="2.80.10.50">
    <property type="match status" value="2"/>
</dbReference>
<dbReference type="Gene3D" id="6.20.350.10">
    <property type="match status" value="1"/>
</dbReference>
<dbReference type="Gene3D" id="1.10.238.10">
    <property type="entry name" value="EF-hand"/>
    <property type="match status" value="1"/>
</dbReference>
<dbReference type="Gene3D" id="1.25.10.30">
    <property type="entry name" value="IP3 receptor type 1 binding core, RIH domain"/>
    <property type="match status" value="1"/>
</dbReference>
<dbReference type="InterPro" id="IPR001870">
    <property type="entry name" value="B30.2/SPRY"/>
</dbReference>
<dbReference type="InterPro" id="IPR043136">
    <property type="entry name" value="B30.2/SPRY_sf"/>
</dbReference>
<dbReference type="InterPro" id="IPR013320">
    <property type="entry name" value="ConA-like_dom_sf"/>
</dbReference>
<dbReference type="InterPro" id="IPR011992">
    <property type="entry name" value="EF-hand-dom_pair"/>
</dbReference>
<dbReference type="InterPro" id="IPR002048">
    <property type="entry name" value="EF_hand_dom"/>
</dbReference>
<dbReference type="InterPro" id="IPR014821">
    <property type="entry name" value="Ins145_P3_rcpt"/>
</dbReference>
<dbReference type="InterPro" id="IPR005821">
    <property type="entry name" value="Ion_trans_dom"/>
</dbReference>
<dbReference type="InterPro" id="IPR036300">
    <property type="entry name" value="MIR_dom_sf"/>
</dbReference>
<dbReference type="InterPro" id="IPR016093">
    <property type="entry name" value="MIR_motif"/>
</dbReference>
<dbReference type="InterPro" id="IPR013662">
    <property type="entry name" value="RIH_assoc-dom"/>
</dbReference>
<dbReference type="InterPro" id="IPR000699">
    <property type="entry name" value="RIH_dom"/>
</dbReference>
<dbReference type="InterPro" id="IPR013333">
    <property type="entry name" value="Ryan_recept"/>
</dbReference>
<dbReference type="InterPro" id="IPR015925">
    <property type="entry name" value="Ryanodine_IP3_receptor"/>
</dbReference>
<dbReference type="InterPro" id="IPR003032">
    <property type="entry name" value="Ryanodine_rcpt"/>
</dbReference>
<dbReference type="InterPro" id="IPR009460">
    <property type="entry name" value="Ryanrecept_TM4-6"/>
</dbReference>
<dbReference type="InterPro" id="IPR048581">
    <property type="entry name" value="RYDR_Jsol"/>
</dbReference>
<dbReference type="InterPro" id="IPR035910">
    <property type="entry name" value="RyR/IP3R_RIH_dom_sf"/>
</dbReference>
<dbReference type="InterPro" id="IPR035761">
    <property type="entry name" value="SPRY1_RyR"/>
</dbReference>
<dbReference type="InterPro" id="IPR035764">
    <property type="entry name" value="SPRY2_RyR"/>
</dbReference>
<dbReference type="InterPro" id="IPR035762">
    <property type="entry name" value="SPRY3_RyR"/>
</dbReference>
<dbReference type="InterPro" id="IPR003877">
    <property type="entry name" value="SPRY_dom"/>
</dbReference>
<dbReference type="PANTHER" id="PTHR46399">
    <property type="entry name" value="B30.2/SPRY DOMAIN-CONTAINING PROTEIN"/>
    <property type="match status" value="1"/>
</dbReference>
<dbReference type="PANTHER" id="PTHR46399:SF9">
    <property type="entry name" value="RYANODINE RECEPTOR 3"/>
    <property type="match status" value="1"/>
</dbReference>
<dbReference type="Pfam" id="PF08709">
    <property type="entry name" value="Ins145_P3_rec"/>
    <property type="match status" value="1"/>
</dbReference>
<dbReference type="Pfam" id="PF00520">
    <property type="entry name" value="Ion_trans"/>
    <property type="match status" value="1"/>
</dbReference>
<dbReference type="Pfam" id="PF02815">
    <property type="entry name" value="MIR"/>
    <property type="match status" value="1"/>
</dbReference>
<dbReference type="Pfam" id="PF08454">
    <property type="entry name" value="RIH_assoc"/>
    <property type="match status" value="1"/>
</dbReference>
<dbReference type="Pfam" id="PF06459">
    <property type="entry name" value="RR_TM4-6"/>
    <property type="match status" value="1"/>
</dbReference>
<dbReference type="Pfam" id="PF01365">
    <property type="entry name" value="RYDR_ITPR"/>
    <property type="match status" value="2"/>
</dbReference>
<dbReference type="Pfam" id="PF21119">
    <property type="entry name" value="RYDR_Jsol"/>
    <property type="match status" value="1"/>
</dbReference>
<dbReference type="Pfam" id="PF02026">
    <property type="entry name" value="RyR"/>
    <property type="match status" value="4"/>
</dbReference>
<dbReference type="Pfam" id="PF00622">
    <property type="entry name" value="SPRY"/>
    <property type="match status" value="3"/>
</dbReference>
<dbReference type="PRINTS" id="PR00795">
    <property type="entry name" value="RYANODINER"/>
</dbReference>
<dbReference type="SMART" id="SM00472">
    <property type="entry name" value="MIR"/>
    <property type="match status" value="4"/>
</dbReference>
<dbReference type="SMART" id="SM00449">
    <property type="entry name" value="SPRY"/>
    <property type="match status" value="3"/>
</dbReference>
<dbReference type="SUPFAM" id="SSF49899">
    <property type="entry name" value="Concanavalin A-like lectins/glucanases"/>
    <property type="match status" value="3"/>
</dbReference>
<dbReference type="SUPFAM" id="SSF47473">
    <property type="entry name" value="EF-hand"/>
    <property type="match status" value="1"/>
</dbReference>
<dbReference type="SUPFAM" id="SSF100909">
    <property type="entry name" value="IP3 receptor type 1 binding core, domain 2"/>
    <property type="match status" value="2"/>
</dbReference>
<dbReference type="SUPFAM" id="SSF82109">
    <property type="entry name" value="MIR domain"/>
    <property type="match status" value="2"/>
</dbReference>
<dbReference type="PROSITE" id="PS50188">
    <property type="entry name" value="B302_SPRY"/>
    <property type="match status" value="3"/>
</dbReference>
<dbReference type="PROSITE" id="PS50919">
    <property type="entry name" value="MIR"/>
    <property type="match status" value="5"/>
</dbReference>
<comment type="function">
    <text evidence="8 9 10 12 15 16">Cytosolic calcium-activated calcium channel that mediates the release of Ca(2+) from the sarcoplasmic reticulum into the cytoplasm in muscle and thereby plays a role in triggering muscle contraction. May regulate Ca(2+) release by other calcium channels. Calcium channel that mediates Ca(2+)-induced Ca(2+) release from the endoplasmic reticulum in non-muscle cells. Plays a role in cellular calcium signaling. Contributes to cellular calcium ion homeostasis. Isoform 2 lacks a predicted transmembrane segment and does not form functional calcium channels by itself; however, it can form tetramers with isoforms that contain the full complement of transmembrane segments and modulate their activity.</text>
</comment>
<comment type="catalytic activity">
    <reaction evidence="15 16">
        <text>Ca(2+)(in) = Ca(2+)(out)</text>
        <dbReference type="Rhea" id="RHEA:29671"/>
        <dbReference type="ChEBI" id="CHEBI:29108"/>
    </reaction>
</comment>
<comment type="activity regulation">
    <text evidence="3">Channel activity is modulated by the alkaloid ryanodine that binds to the open calcium-release channel with high affinity. At low concentrations, ryanodine maintains the channel in an open conformation. High ryanodine concentrations inhibit channel activity. Channel activity is regulated by calmodulin (CALM). The calcium release is activated by elevated cytoplasmic calcium levels in the micromolar range, by caffeine and adenine nucleotides, such as AMP and ATP. Inhibited by Mg(2+) and ruthenium red.</text>
</comment>
<comment type="subunit">
    <text evidence="3">Homotetramer. Isoform 2 can form tetramers with isoform 1. Heterotetramer with RYR2. Interacts with FKBP1A. Interacts with CALM. Interacts with SELENON (By similarity).</text>
</comment>
<comment type="subcellular location">
    <subcellularLocation>
        <location evidence="16">Sarcoplasmic reticulum membrane</location>
        <topology evidence="4">Multi-pass membrane protein</topology>
    </subcellularLocation>
</comment>
<comment type="alternative products">
    <event type="alternative splicing"/>
    <isoform>
        <id>A2AGL3-1</id>
        <name>1</name>
        <name>RYR3L</name>
        <sequence type="displayed"/>
    </isoform>
    <isoform>
        <id>A2AGL3-2</id>
        <name>2</name>
        <name>RYR3S</name>
        <sequence type="described" ref="VSP_042304"/>
    </isoform>
</comment>
<comment type="tissue specificity">
    <text evidence="9 10 12 13 14 16">Detected in hippocampus, cerebellum, striatum, frontal brain cortex and parietal brain cortex. Detected in skeletal muscle, diaphragm muscle and myometrium (at protein level). Detected in egg cells. Detected in heart, diaphragm, stomach, spleen, ovary, testis germ cells, brain and cerebellum. Detected in cerebral artery smooth muscle cells.</text>
</comment>
<comment type="domain">
    <text evidence="2">The calcium release channel activity resides in the C-terminal region while the remaining part of the protein resides in the cytoplasm.</text>
</comment>
<comment type="disruption phenotype">
    <text evidence="11 15">No apparent phenotype. Mice are born at the expected Mendelian rate and are fertile. They appear normal, except for increased locomotor activity and decreased social contact duration in social interaction tests.</text>
</comment>
<comment type="miscellaneous">
    <molecule>Isoform 2</molecule>
    <text evidence="18">Lacks a predicted transmembrane segment and is not expected to form functional calcium channels.</text>
</comment>
<comment type="similarity">
    <text evidence="18">Belongs to the ryanodine receptor (TC 1.A.3.1) family. RYR3 subfamily.</text>
</comment>
<name>RYR3_MOUSE</name>
<gene>
    <name evidence="20" type="primary">Ryr3</name>
</gene>
<protein>
    <recommendedName>
        <fullName evidence="19">Ryanodine receptor 3</fullName>
        <shortName>RYR-3</shortName>
        <shortName>RyR3</shortName>
    </recommendedName>
    <alternativeName>
        <fullName>Brain ryanodine receptor-calcium release channel</fullName>
    </alternativeName>
    <alternativeName>
        <fullName>Brain-type ryanodine receptor</fullName>
    </alternativeName>
    <alternativeName>
        <fullName>Type 3 ryanodine receptor</fullName>
    </alternativeName>
</protein>
<accession>A2AGL3</accession>
<accession>P70184</accession>
<accession>P70185</accession>
<accession>Q3V1H0</accession>
<accession>Q4JFC4</accession>
<accession>Q60836</accession>
<accession>Q62175</accession>
<accession>Q62198</accession>
<accession>Q9QY91</accession>
<organism>
    <name type="scientific">Mus musculus</name>
    <name type="common">Mouse</name>
    <dbReference type="NCBI Taxonomy" id="10090"/>
    <lineage>
        <taxon>Eukaryota</taxon>
        <taxon>Metazoa</taxon>
        <taxon>Chordata</taxon>
        <taxon>Craniata</taxon>
        <taxon>Vertebrata</taxon>
        <taxon>Euteleostomi</taxon>
        <taxon>Mammalia</taxon>
        <taxon>Eutheria</taxon>
        <taxon>Euarchontoglires</taxon>
        <taxon>Glires</taxon>
        <taxon>Rodentia</taxon>
        <taxon>Myomorpha</taxon>
        <taxon>Muroidea</taxon>
        <taxon>Muridae</taxon>
        <taxon>Murinae</taxon>
        <taxon>Mus</taxon>
        <taxon>Mus</taxon>
    </lineage>
</organism>
<feature type="chain" id="PRO_0000415648" description="Ryanodine receptor 3">
    <location>
        <begin position="1"/>
        <end position="4863"/>
    </location>
</feature>
<feature type="topological domain" description="Cytoplasmic" evidence="4">
    <location>
        <begin position="1"/>
        <end position="4179"/>
    </location>
</feature>
<feature type="transmembrane region" description="Helical" evidence="4">
    <location>
        <begin position="4180"/>
        <end position="4200"/>
    </location>
</feature>
<feature type="transmembrane region" description="Helical" evidence="4">
    <location>
        <begin position="4403"/>
        <end position="4423"/>
    </location>
</feature>
<feature type="transmembrane region" description="Helical" evidence="4">
    <location>
        <begin position="4478"/>
        <end position="4498"/>
    </location>
</feature>
<feature type="transmembrane region" description="Helical" evidence="4">
    <location>
        <begin position="4603"/>
        <end position="4623"/>
    </location>
</feature>
<feature type="transmembrane region" description="Helical" evidence="4">
    <location>
        <begin position="4626"/>
        <end position="4646"/>
    </location>
</feature>
<feature type="transmembrane region" description="Helical" evidence="4">
    <location>
        <begin position="4665"/>
        <end position="4685"/>
    </location>
</feature>
<feature type="intramembrane region" description="Pore-forming" evidence="1">
    <location>
        <begin position="4716"/>
        <end position="4725"/>
    </location>
</feature>
<feature type="transmembrane region" description="Helical" evidence="4">
    <location>
        <begin position="4746"/>
        <end position="4766"/>
    </location>
</feature>
<feature type="topological domain" description="Cytoplasmic" evidence="4">
    <location>
        <begin position="4767"/>
        <end position="4863"/>
    </location>
</feature>
<feature type="domain" description="MIR 1" evidence="5">
    <location>
        <begin position="100"/>
        <end position="155"/>
    </location>
</feature>
<feature type="domain" description="MIR 2" evidence="5">
    <location>
        <begin position="162"/>
        <end position="207"/>
    </location>
</feature>
<feature type="domain" description="MIR 3" evidence="5">
    <location>
        <begin position="215"/>
        <end position="269"/>
    </location>
</feature>
<feature type="domain" description="MIR 4" evidence="5">
    <location>
        <begin position="275"/>
        <end position="333"/>
    </location>
</feature>
<feature type="domain" description="MIR 5" evidence="5">
    <location>
        <begin position="343"/>
        <end position="400"/>
    </location>
</feature>
<feature type="domain" description="B30.2/SPRY 1" evidence="6">
    <location>
        <begin position="585"/>
        <end position="796"/>
    </location>
</feature>
<feature type="repeat" description="1">
    <location>
        <begin position="840"/>
        <end position="953"/>
    </location>
</feature>
<feature type="repeat" description="2">
    <location>
        <begin position="954"/>
        <end position="1068"/>
    </location>
</feature>
<feature type="domain" description="B30.2/SPRY 2" evidence="6">
    <location>
        <begin position="1012"/>
        <end position="1208"/>
    </location>
</feature>
<feature type="domain" description="B30.2/SPRY 3" evidence="6">
    <location>
        <begin position="1254"/>
        <end position="1466"/>
    </location>
</feature>
<feature type="repeat" description="3">
    <location>
        <begin position="2587"/>
        <end position="2705"/>
    </location>
</feature>
<feature type="repeat" description="4">
    <location>
        <begin position="2706"/>
        <end position="2818"/>
    </location>
</feature>
<feature type="region of interest" description="4 X approximate repeats">
    <location>
        <begin position="840"/>
        <end position="2818"/>
    </location>
</feature>
<feature type="region of interest" description="Interaction with FKBP1A" evidence="1">
    <location>
        <begin position="2320"/>
        <end position="2333"/>
    </location>
</feature>
<feature type="region of interest" description="Disordered" evidence="7">
    <location>
        <begin position="3329"/>
        <end position="3348"/>
    </location>
</feature>
<feature type="region of interest" description="Interaction with CALM" evidence="1">
    <location>
        <begin position="3462"/>
        <end position="3491"/>
    </location>
</feature>
<feature type="region of interest" description="Disordered" evidence="7">
    <location>
        <begin position="3576"/>
        <end position="3604"/>
    </location>
</feature>
<feature type="region of interest" description="Disordered" evidence="7">
    <location>
        <begin position="4095"/>
        <end position="4126"/>
    </location>
</feature>
<feature type="region of interest" description="Disordered" evidence="7">
    <location>
        <begin position="4326"/>
        <end position="4347"/>
    </location>
</feature>
<feature type="compositionally biased region" description="Basic and acidic residues" evidence="7">
    <location>
        <begin position="3593"/>
        <end position="3604"/>
    </location>
</feature>
<feature type="compositionally biased region" description="Acidic residues" evidence="7">
    <location>
        <begin position="4104"/>
        <end position="4126"/>
    </location>
</feature>
<feature type="site" description="Important for activation by Ca(2+)" evidence="1">
    <location>
        <position position="3876"/>
    </location>
</feature>
<feature type="splice variant" id="VSP_042304" description="In isoform 2." evidence="17">
    <location>
        <begin position="4397"/>
        <end position="4425"/>
    </location>
</feature>
<feature type="sequence conflict" description="In Ref. 3; AAF21940." evidence="18" ref="3">
    <original>S</original>
    <variation>I</variation>
    <location>
        <position position="4169"/>
    </location>
</feature>
<feature type="sequence conflict" description="In Ref. 3; AAF21940." evidence="18" ref="3">
    <original>E</original>
    <variation>Q</variation>
    <location>
        <position position="4214"/>
    </location>
</feature>
<feature type="sequence conflict" description="In Ref. 3; AAF21940." evidence="18" ref="3">
    <original>T</original>
    <variation>A</variation>
    <location>
        <position position="4427"/>
    </location>
</feature>
<feature type="sequence conflict" description="In Ref. 4; BAE21181." evidence="18" ref="4">
    <original>E</original>
    <variation>V</variation>
    <location>
        <position position="4450"/>
    </location>
</feature>
<feature type="sequence conflict" description="In Ref. 5; CAA58786." evidence="18" ref="5">
    <original>F</original>
    <variation>L</variation>
    <location>
        <position position="4457"/>
    </location>
</feature>
<feature type="sequence conflict" description="In Ref. 5; CAA58786." evidence="18" ref="5">
    <original>T</original>
    <variation>N</variation>
    <location>
        <position position="4469"/>
    </location>
</feature>
<feature type="sequence conflict" description="In Ref. 6; AAA64957." evidence="18" ref="6">
    <original>H</original>
    <variation>N</variation>
    <location>
        <position position="4602"/>
    </location>
</feature>
<reference key="1">
    <citation type="journal article" date="2009" name="PLoS Biol.">
        <title>Lineage-specific biology revealed by a finished genome assembly of the mouse.</title>
        <authorList>
            <person name="Church D.M."/>
            <person name="Goodstadt L."/>
            <person name="Hillier L.W."/>
            <person name="Zody M.C."/>
            <person name="Goldstein S."/>
            <person name="She X."/>
            <person name="Bult C.J."/>
            <person name="Agarwala R."/>
            <person name="Cherry J.L."/>
            <person name="DiCuccio M."/>
            <person name="Hlavina W."/>
            <person name="Kapustin Y."/>
            <person name="Meric P."/>
            <person name="Maglott D."/>
            <person name="Birtle Z."/>
            <person name="Marques A.C."/>
            <person name="Graves T."/>
            <person name="Zhou S."/>
            <person name="Teague B."/>
            <person name="Potamousis K."/>
            <person name="Churas C."/>
            <person name="Place M."/>
            <person name="Herschleb J."/>
            <person name="Runnheim R."/>
            <person name="Forrest D."/>
            <person name="Amos-Landgraf J."/>
            <person name="Schwartz D.C."/>
            <person name="Cheng Z."/>
            <person name="Lindblad-Toh K."/>
            <person name="Eichler E.E."/>
            <person name="Ponting C.P."/>
        </authorList>
    </citation>
    <scope>NUCLEOTIDE SEQUENCE [LARGE SCALE GENOMIC DNA]</scope>
    <source>
        <strain>C57BL/6J</strain>
    </source>
</reference>
<reference key="2">
    <citation type="journal article" date="1996" name="J. Biol. Chem.">
        <title>Generation and characterization of mutant mice lacking ryanodine receptor type 3.</title>
        <authorList>
            <person name="Takeshima H."/>
            <person name="Ikemoto T."/>
            <person name="Nishi M."/>
            <person name="Nishiyama N."/>
            <person name="Shimuta M."/>
            <person name="Sugitani Y."/>
            <person name="Kuno J."/>
            <person name="Saito I."/>
            <person name="Saito H."/>
            <person name="Endo M."/>
            <person name="Iino M."/>
            <person name="Noda T."/>
        </authorList>
    </citation>
    <scope>NUCLEOTIDE SEQUENCE [MRNA] OF 1-67</scope>
    <scope>FUNCTION</scope>
    <scope>TRANSPORTER ACTIVITY</scope>
    <scope>DISRUPTION PHENOTYPE</scope>
    <source>
        <tissue>Brain</tissue>
    </source>
</reference>
<reference key="3">
    <citation type="submission" date="1998-12" db="EMBL/GenBank/DDBJ databases">
        <title>Calcium-induced calcium release dependent on ryanodine receptor type 3 (RyR3) modulates both neuronal excitability and transmitter release.</title>
        <authorList>
            <person name="Chameau P."/>
            <person name="Van de Vrede Y."/>
            <person name="Lucas-Meunier E."/>
            <person name="Fossier P."/>
            <person name="Denizot J.-P."/>
            <person name="Shimahara T."/>
            <person name="Tauc L."/>
            <person name="Baux G."/>
        </authorList>
    </citation>
    <scope>NUCLEOTIDE SEQUENCE [MRNA] OF 4088-4541 (ISOFORM 1)</scope>
    <source>
        <strain>SWR/J</strain>
        <tissue>Brain</tissue>
    </source>
</reference>
<reference key="4">
    <citation type="journal article" date="2005" name="Science">
        <title>The transcriptional landscape of the mammalian genome.</title>
        <authorList>
            <person name="Carninci P."/>
            <person name="Kasukawa T."/>
            <person name="Katayama S."/>
            <person name="Gough J."/>
            <person name="Frith M.C."/>
            <person name="Maeda N."/>
            <person name="Oyama R."/>
            <person name="Ravasi T."/>
            <person name="Lenhard B."/>
            <person name="Wells C."/>
            <person name="Kodzius R."/>
            <person name="Shimokawa K."/>
            <person name="Bajic V.B."/>
            <person name="Brenner S.E."/>
            <person name="Batalov S."/>
            <person name="Forrest A.R."/>
            <person name="Zavolan M."/>
            <person name="Davis M.J."/>
            <person name="Wilming L.G."/>
            <person name="Aidinis V."/>
            <person name="Allen J.E."/>
            <person name="Ambesi-Impiombato A."/>
            <person name="Apweiler R."/>
            <person name="Aturaliya R.N."/>
            <person name="Bailey T.L."/>
            <person name="Bansal M."/>
            <person name="Baxter L."/>
            <person name="Beisel K.W."/>
            <person name="Bersano T."/>
            <person name="Bono H."/>
            <person name="Chalk A.M."/>
            <person name="Chiu K.P."/>
            <person name="Choudhary V."/>
            <person name="Christoffels A."/>
            <person name="Clutterbuck D.R."/>
            <person name="Crowe M.L."/>
            <person name="Dalla E."/>
            <person name="Dalrymple B.P."/>
            <person name="de Bono B."/>
            <person name="Della Gatta G."/>
            <person name="di Bernardo D."/>
            <person name="Down T."/>
            <person name="Engstrom P."/>
            <person name="Fagiolini M."/>
            <person name="Faulkner G."/>
            <person name="Fletcher C.F."/>
            <person name="Fukushima T."/>
            <person name="Furuno M."/>
            <person name="Futaki S."/>
            <person name="Gariboldi M."/>
            <person name="Georgii-Hemming P."/>
            <person name="Gingeras T.R."/>
            <person name="Gojobori T."/>
            <person name="Green R.E."/>
            <person name="Gustincich S."/>
            <person name="Harbers M."/>
            <person name="Hayashi Y."/>
            <person name="Hensch T.K."/>
            <person name="Hirokawa N."/>
            <person name="Hill D."/>
            <person name="Huminiecki L."/>
            <person name="Iacono M."/>
            <person name="Ikeo K."/>
            <person name="Iwama A."/>
            <person name="Ishikawa T."/>
            <person name="Jakt M."/>
            <person name="Kanapin A."/>
            <person name="Katoh M."/>
            <person name="Kawasawa Y."/>
            <person name="Kelso J."/>
            <person name="Kitamura H."/>
            <person name="Kitano H."/>
            <person name="Kollias G."/>
            <person name="Krishnan S.P."/>
            <person name="Kruger A."/>
            <person name="Kummerfeld S.K."/>
            <person name="Kurochkin I.V."/>
            <person name="Lareau L.F."/>
            <person name="Lazarevic D."/>
            <person name="Lipovich L."/>
            <person name="Liu J."/>
            <person name="Liuni S."/>
            <person name="McWilliam S."/>
            <person name="Madan Babu M."/>
            <person name="Madera M."/>
            <person name="Marchionni L."/>
            <person name="Matsuda H."/>
            <person name="Matsuzawa S."/>
            <person name="Miki H."/>
            <person name="Mignone F."/>
            <person name="Miyake S."/>
            <person name="Morris K."/>
            <person name="Mottagui-Tabar S."/>
            <person name="Mulder N."/>
            <person name="Nakano N."/>
            <person name="Nakauchi H."/>
            <person name="Ng P."/>
            <person name="Nilsson R."/>
            <person name="Nishiguchi S."/>
            <person name="Nishikawa S."/>
            <person name="Nori F."/>
            <person name="Ohara O."/>
            <person name="Okazaki Y."/>
            <person name="Orlando V."/>
            <person name="Pang K.C."/>
            <person name="Pavan W.J."/>
            <person name="Pavesi G."/>
            <person name="Pesole G."/>
            <person name="Petrovsky N."/>
            <person name="Piazza S."/>
            <person name="Reed J."/>
            <person name="Reid J.F."/>
            <person name="Ring B.Z."/>
            <person name="Ringwald M."/>
            <person name="Rost B."/>
            <person name="Ruan Y."/>
            <person name="Salzberg S.L."/>
            <person name="Sandelin A."/>
            <person name="Schneider C."/>
            <person name="Schoenbach C."/>
            <person name="Sekiguchi K."/>
            <person name="Semple C.A."/>
            <person name="Seno S."/>
            <person name="Sessa L."/>
            <person name="Sheng Y."/>
            <person name="Shibata Y."/>
            <person name="Shimada H."/>
            <person name="Shimada K."/>
            <person name="Silva D."/>
            <person name="Sinclair B."/>
            <person name="Sperling S."/>
            <person name="Stupka E."/>
            <person name="Sugiura K."/>
            <person name="Sultana R."/>
            <person name="Takenaka Y."/>
            <person name="Taki K."/>
            <person name="Tammoja K."/>
            <person name="Tan S.L."/>
            <person name="Tang S."/>
            <person name="Taylor M.S."/>
            <person name="Tegner J."/>
            <person name="Teichmann S.A."/>
            <person name="Ueda H.R."/>
            <person name="van Nimwegen E."/>
            <person name="Verardo R."/>
            <person name="Wei C.L."/>
            <person name="Yagi K."/>
            <person name="Yamanishi H."/>
            <person name="Zabarovsky E."/>
            <person name="Zhu S."/>
            <person name="Zimmer A."/>
            <person name="Hide W."/>
            <person name="Bult C."/>
            <person name="Grimmond S.M."/>
            <person name="Teasdale R.D."/>
            <person name="Liu E.T."/>
            <person name="Brusic V."/>
            <person name="Quackenbush J."/>
            <person name="Wahlestedt C."/>
            <person name="Mattick J.S."/>
            <person name="Hume D.A."/>
            <person name="Kai C."/>
            <person name="Sasaki D."/>
            <person name="Tomaru Y."/>
            <person name="Fukuda S."/>
            <person name="Kanamori-Katayama M."/>
            <person name="Suzuki M."/>
            <person name="Aoki J."/>
            <person name="Arakawa T."/>
            <person name="Iida J."/>
            <person name="Imamura K."/>
            <person name="Itoh M."/>
            <person name="Kato T."/>
            <person name="Kawaji H."/>
            <person name="Kawagashira N."/>
            <person name="Kawashima T."/>
            <person name="Kojima M."/>
            <person name="Kondo S."/>
            <person name="Konno H."/>
            <person name="Nakano K."/>
            <person name="Ninomiya N."/>
            <person name="Nishio T."/>
            <person name="Okada M."/>
            <person name="Plessy C."/>
            <person name="Shibata K."/>
            <person name="Shiraki T."/>
            <person name="Suzuki S."/>
            <person name="Tagami M."/>
            <person name="Waki K."/>
            <person name="Watahiki A."/>
            <person name="Okamura-Oho Y."/>
            <person name="Suzuki H."/>
            <person name="Kawai J."/>
            <person name="Hayashizaki Y."/>
        </authorList>
    </citation>
    <scope>NUCLEOTIDE SEQUENCE [LARGE SCALE MRNA] OF 4220-4863 (ISOFORM 2)</scope>
    <source>
        <strain>C57BL/6J</strain>
        <tissue>Skin</tissue>
    </source>
</reference>
<reference key="5">
    <citation type="journal article" date="1995" name="J. Cell Biol.">
        <title>The ryanodine receptor/calcium channel genes are widely and differentially expressed in murine brain and peripheral tissues.</title>
        <authorList>
            <person name="Giannini G."/>
            <person name="Conti A."/>
            <person name="Mammarella S."/>
            <person name="Scrobogna M."/>
            <person name="Sorrentino V."/>
        </authorList>
    </citation>
    <scope>NUCLEOTIDE SEQUENCE [MRNA] OF 4405-4692 (ISOFORM 1)</scope>
    <scope>TISSUE SPECIFICITY</scope>
    <source>
        <strain>BALB/cJ</strain>
        <tissue>Brain</tissue>
    </source>
</reference>
<reference key="6">
    <citation type="journal article" date="1995" name="Development">
        <title>Regulation of mouse egg activation: presence of ryanodine receptors and effects of microinjected ryanodine and cyclic ADP ribose on uninseminated and inseminated eggs.</title>
        <authorList>
            <person name="Ayabe T."/>
            <person name="Kopf G.S."/>
            <person name="Schultz R.M."/>
        </authorList>
    </citation>
    <scope>NUCLEOTIDE SEQUENCE [MRNA] OF 4598-4841</scope>
    <scope>SUBUNIT</scope>
    <scope>TISSUE SPECIFICITY</scope>
    <source>
        <tissue>Egg</tissue>
    </source>
</reference>
<reference key="7">
    <citation type="journal article" date="1995" name="EMBO J.">
        <title>Ca(2+)-induced Ca2+ release in myocytes from dyspedic mice lacking the type-1 ryanodine receptor.</title>
        <authorList>
            <person name="Takeshima H."/>
            <person name="Yamazawa T."/>
            <person name="Ikemoto T."/>
            <person name="Takekura H."/>
            <person name="Nishi M."/>
            <person name="Noda T."/>
            <person name="Iino M."/>
        </authorList>
    </citation>
    <scope>NUCLEOTIDE SEQUENCE [MRNA] OF 4741-4863</scope>
    <scope>FUNCTION</scope>
    <scope>TISSUE SPECIFICITY</scope>
    <source>
        <strain>C57BL/6J</strain>
        <tissue>Brain</tissue>
    </source>
</reference>
<reference key="8">
    <citation type="journal article" date="1998" name="EMBO J.">
        <title>Functional properties of the ryanodine receptor type 3 (RyR3) Ca2+ release channel.</title>
        <authorList>
            <person name="Sonnleitner A."/>
            <person name="Conti A."/>
            <person name="Bertocchini F."/>
            <person name="Schindler H."/>
            <person name="Sorrentino V."/>
        </authorList>
    </citation>
    <scope>FUNCTION</scope>
    <scope>TRANSPORTER ACTIVITY</scope>
    <scope>SUBCELLULAR LOCATION</scope>
    <scope>TISSUE SPECIFICITY</scope>
</reference>
<reference key="9">
    <citation type="journal article" date="2001" name="Circ. Res.">
        <title>Regulation of calcium sparks and spontaneous transient outward currents by RyR3 in arterial vascular smooth muscle cells.</title>
        <authorList>
            <person name="Lohn M."/>
            <person name="Jessner W."/>
            <person name="Furstenau M."/>
            <person name="Wellner M."/>
            <person name="Sorrentino V."/>
            <person name="Haller H."/>
            <person name="Luft F.C."/>
            <person name="Gollasch M."/>
        </authorList>
    </citation>
    <scope>FUNCTION</scope>
    <scope>TISSUE SPECIFICITY</scope>
</reference>
<reference key="10">
    <citation type="journal article" date="2001" name="J. Biol. Chem.">
        <title>RyR3 amplifies RyR1-mediated Ca(2+)-induced Ca(2+) release in neonatal mammalian skeletal muscle.</title>
        <authorList>
            <person name="Yang D."/>
            <person name="Pan Z."/>
            <person name="Takeshima H."/>
            <person name="Wu C."/>
            <person name="Nagaraj R.Y."/>
            <person name="Ma J."/>
            <person name="Cheng H."/>
        </authorList>
    </citation>
    <scope>FUNCTION</scope>
</reference>
<reference key="11">
    <citation type="journal article" date="2007" name="Am. J. Physiol.">
        <title>Role of RYR3 splice variants in calcium signaling in mouse nonpregnant and pregnant myometrium.</title>
        <authorList>
            <person name="Dabertrand F."/>
            <person name="Fritz N."/>
            <person name="Mironneau J."/>
            <person name="Macrez N."/>
            <person name="Morel J.L."/>
        </authorList>
    </citation>
    <scope>FUNCTION</scope>
    <scope>CHARACTERIZATION OF ISOFORM 2</scope>
    <scope>ALTERNATIVE SPLICING</scope>
    <scope>TISSUE SPECIFICITY</scope>
</reference>
<reference key="12">
    <citation type="journal article" date="2009" name="Front. Behav. Neurosci.">
        <title>Comprehensive behavioral phenotyping of ryanodine receptor type 3 (RyR3) knockout mice: decreased social contact duration in two social interaction tests.</title>
        <authorList>
            <person name="Matsuo N."/>
            <person name="Tanda K."/>
            <person name="Nakanishi K."/>
            <person name="Yamasaki N."/>
            <person name="Toyama K."/>
            <person name="Takao K."/>
            <person name="Takeshima H."/>
            <person name="Miyakawa T."/>
        </authorList>
    </citation>
    <scope>DISRUPTION PHENOTYPE</scope>
</reference>
<reference key="13">
    <citation type="journal article" date="2010" name="Cell">
        <title>A tissue-specific atlas of mouse protein phosphorylation and expression.</title>
        <authorList>
            <person name="Huttlin E.L."/>
            <person name="Jedrychowski M.P."/>
            <person name="Elias J.E."/>
            <person name="Goswami T."/>
            <person name="Rad R."/>
            <person name="Beausoleil S.A."/>
            <person name="Villen J."/>
            <person name="Haas W."/>
            <person name="Sowa M.E."/>
            <person name="Gygi S.P."/>
        </authorList>
    </citation>
    <scope>IDENTIFICATION BY MASS SPECTROMETRY [LARGE SCALE ANALYSIS]</scope>
    <source>
        <tissue>Brain</tissue>
    </source>
</reference>
<reference key="14">
    <citation type="journal article" date="2010" name="FEBS Lett.">
        <title>Ryanodine receptor studies using genetically engineered mice.</title>
        <authorList>
            <person name="Kushnir A."/>
            <person name="Betzenhauser M.J."/>
            <person name="Marks A.R."/>
        </authorList>
    </citation>
    <scope>REVIEW</scope>
</reference>
<keyword id="KW-0025">Alternative splicing</keyword>
<keyword id="KW-0106">Calcium</keyword>
<keyword id="KW-0107">Calcium channel</keyword>
<keyword id="KW-0109">Calcium transport</keyword>
<keyword id="KW-0112">Calmodulin-binding</keyword>
<keyword id="KW-0407">Ion channel</keyword>
<keyword id="KW-0406">Ion transport</keyword>
<keyword id="KW-1071">Ligand-gated ion channel</keyword>
<keyword id="KW-0472">Membrane</keyword>
<keyword id="KW-0675">Receptor</keyword>
<keyword id="KW-1185">Reference proteome</keyword>
<keyword id="KW-0677">Repeat</keyword>
<keyword id="KW-0703">Sarcoplasmic reticulum</keyword>
<keyword id="KW-0812">Transmembrane</keyword>
<keyword id="KW-1133">Transmembrane helix</keyword>
<keyword id="KW-0813">Transport</keyword>
<evidence type="ECO:0000250" key="1"/>
<evidence type="ECO:0000250" key="2">
    <source>
        <dbReference type="UniProtKB" id="P11716"/>
    </source>
</evidence>
<evidence type="ECO:0000250" key="3">
    <source>
        <dbReference type="UniProtKB" id="Q9TS33"/>
    </source>
</evidence>
<evidence type="ECO:0000255" key="4"/>
<evidence type="ECO:0000255" key="5">
    <source>
        <dbReference type="PROSITE-ProRule" id="PRU00131"/>
    </source>
</evidence>
<evidence type="ECO:0000255" key="6">
    <source>
        <dbReference type="PROSITE-ProRule" id="PRU00548"/>
    </source>
</evidence>
<evidence type="ECO:0000256" key="7">
    <source>
        <dbReference type="SAM" id="MobiDB-lite"/>
    </source>
</evidence>
<evidence type="ECO:0000269" key="8">
    <source>
    </source>
</evidence>
<evidence type="ECO:0000269" key="9">
    <source>
    </source>
</evidence>
<evidence type="ECO:0000269" key="10">
    <source>
    </source>
</evidence>
<evidence type="ECO:0000269" key="11">
    <source>
    </source>
</evidence>
<evidence type="ECO:0000269" key="12">
    <source>
    </source>
</evidence>
<evidence type="ECO:0000269" key="13">
    <source>
    </source>
</evidence>
<evidence type="ECO:0000269" key="14">
    <source>
    </source>
</evidence>
<evidence type="ECO:0000269" key="15">
    <source>
    </source>
</evidence>
<evidence type="ECO:0000269" key="16">
    <source>
    </source>
</evidence>
<evidence type="ECO:0000303" key="17">
    <source>
    </source>
</evidence>
<evidence type="ECO:0000305" key="18"/>
<evidence type="ECO:0000305" key="19">
    <source>
    </source>
</evidence>
<evidence type="ECO:0000312" key="20">
    <source>
        <dbReference type="MGI" id="MGI:99684"/>
    </source>
</evidence>
<sequence length="4863" mass="551328">MAEAGEGGEDEIQFLRTEDEVVLQCIANIHKEQRKFCLAAEGLGNRLCFLEPTSEAKYIPPDLCVCNFVLEQSLSVRALQEMLANTVENGGEGAAQGGGHRTLLYGHAILLRHSFSGMYLTCLTTSRSQTDKLAFDVGLREHATGEACWWTIHPASKQRSEGEKVRIGDDLILVSVSSERYLHLSISNGSIQVDASFMQTLWNVHPTCSGSSIEEGYLLGGHVVRLFHGHDECLTIPSTDQNDSQHRRVFYEAGGAGTRARSLWRVEPLRISWSGSNIRWGQAFRLRHLTTGHYLALTEDQGLLLQDRGKSDTKSTAFSFRASKEIKEKLDSSHKRDMEGMGVPEIKYGDSVCFVQHVASGLWVTYKAQDAKTSRLGPLKRKVILHQEGHMDDGLTLQRCQQEESQAARIIRNTTALFSQFVSGNNRTTAPVALPTEEVLQTLQDLIAYFQPPEDEMQHEDKQNKLRSLKNRQNLFKEEGMLALVLNCIDRLNIYNSVAHFAGIVREESGMAWKEILNLLYKLLAALIRGNRNNCAQFSNNLDWLISKLDRLESSSGILEVLHCILIESPEALNLIAEGHIKSIISLLDKHGRNHKVLDVLCSLCLCNGVAVRANQNLICDNLLPRRNLLLQTRLINDVTSIRPNIFLGVAEGSPQYKKWYFELIIDQVEPFLTAEPTHLRVGWASSSGYAPYPGGGEGWGGNGVGDDLYSYGFDGLHLWSGRIPRAVASINQHLLKSDDVVSCCLDLGVPSISFRINGQPVQGMFENFNTDGLFFPVMSFSAGVKVRFLMGGRHGEFKFLPPSGYAPCYEALLPKEKMRLEPVKEYKRDADGVRDLLGTTQFLSQASFIPCPIDTSQVVLPLHLEKIRDRLAENIHELWGMNKIELGWTYGKVRDDNKRQHPCLVEFSKLPETEKNYNLQMSTETLKTLLALGCHIAHVNPAAEEDLKKVKLPKNYMMSNGYKPAPLDLSDVKLLPPQEILVDKLAENAHNVWAKDRIKQGWTYGIQQDLKNKRNPRLVPYALLDERTKKSNRDSLREAVRTFVGYGYNIEPSDQELADPTVEKVSIDKIRFFRVERSYAVKSGKWYFEFEVVTGGDMRVGWARPGCRPDIELGADDQAFVFEGSRGQRWHQGSGYFGRTWQPGDVVGCMINLDDASMVFTLNGELLITNKGSELAFADYEIENGFVPICSLGLSQIGRMNLGTDASTFKFYTMCGLQEGFEPFAVNMNRDVAVWFSKRLPTFVNVPKDHPHIEVVRIDGTMDSPPCLKVTHKTFGTQNSNANMIYCRLSMPVECHSSFSHSPCLDSEAFQKRKQMQEILSHTTTQCYYAIRIFAGQDPSCVWVGWVTPDYHLYSEKFDLNKNCTVTVTLGDERGRVHESVKRSNCYMVWGGDIVASSQRSSRSNVDLEIGCLLDLAMGMLSFSANGKELGTCYQVEPNTKVFPAVFLQPTSTSLFQFELGKLKNAMPLSAAIFKSEEKNPTPQCPPRLDVQTIQPVLWSRMPSSFLKVETERVSERHGWVVQCLEPLQMMALHIPEENRCVDILELCEQEDLMQFHYHTLRLYSAVCALGNSRVASALCSHVDLSQLFYAIDNKYLPGLLRSGFYDLLISIHLANAKERKLMMKNEYIIPITSATRNIRLYPDESKRHGLPGVGLRTCLKPGFRFSTPCFVVTSEDHQKQSPEIPLQILKTKALSMLTEAVHCSGAHIRDPVGGSVEFQFVPVLKLIGTLLVMGVFDDDDVRQILLLIDPSVFGEHSGETEEGVEKEVTHAEEKAVEAGEKACKEAPVKGLLQTRLPESVKLQMCELLSYLCDCELQHRVEAIVAFGDIYVSKLQANQKFRYNELMQALNMSAALTARKTREFRSPPQEQINMLLNFHLGENCPCPEEIREELYDFHEDLLVHCGVPLEEEEEEEEDTSWTGKLCALVYKIKGPPKPEKEQPTEEEKPYPTTLKELVSQTMIRWAQENQIQDAELVRMMFNLLRRQYDSIGELLQALRKTYTISQASVNDTINLLAALGQIRSLLSVRMGREEELLMINGLGDIMNNKVFYQHPNLMRVLGMHETVMEVMVNVLGTEKSQIAFPKMVASCCRFLCYFCRISRQNQKAMFEHLSYLLENSSVGLASPSMRGSTPLDVAASSVMDNNELALGLEEPDLEKVVTYLAGCGLQSCPMLLARGYPDVGWNPIEGERYLSFLRFAVFVNSESVEENASVVVKLLIRRPECFGPALRGEGGNGLLAAMQGAIKISENPALDLPSQGYKTEVTQDDGEEEEIVHMGNAIMSFYSALIDLLGRCAPEMHLIQTGKGEAIRIRSILRSLVPTEDLVGIISIPLKLPSLNKDGSVSEPDMAANFCPDHKAPMVLFLDRVYGIKDQTFLLHLLEVGFLPDLRASASLDTVSLSTTEAALALNRYLCSAVLPLLTRCAPLFSGTEHCTSLIDSTLQTIYRLSKGRSLTKAQRDTIEECLLAICNHLRPSMLQQLLRRLVFDVPQLSEYCKMPLKLLTNHYEQCWKYYCLPSGWGSYGLAVEEELHLTEKLFWGIFDSLSHKKYDLDLFRMALPCLSAIAGALPPDYLDTRITATLEKQVSVDADGNFDPKPINTMNFSLPEKLEYIVTKYAEHSHDKWACDKSHSGWKYGISLDENVKTHPLIRPFKTLTEKEKEIYRWPARESLKTMLAVGWTVERTKEGEALVQQRENEKLRCVSQTNQGNSYSPAPLDLSNVVLSRELQGMVEVVAENYHNIWAKKKKLELESKGGGSHPLLVPYDTLTAKEKFRDREKAQDLFKFLQVNGILVSRGMKDLELDASSMEKRFAYKFLKKILKYVDAAQEFIAHLEAIVSSGKTEKSPHDQEIKFFAKVLLPLVDQYFTNHRLYFLSSPLKPLSSSGYASHKEKEMVASLFCKLAALVRHRISLFGSDSTTMVSCLHILAQTLDTRTVMKSGSELVKAGLRAFFENAAEDLEKTSENLKLGKFTHSRTQIKGVSQNINYTTVALLPILTSIFEHIAQHQFGVDLLLSDVQVSCYHILCSLYSLGTGKNIYVERQRPALGECLASLAAAIPVAFLEPSLNRHNPLSVFNTKTPRERSILGMPDKVEDMCPDIPQLEGLMKEINDLAESGARYTEMPHVIEVILPMLCNYLSYWWERGPENLPPSTGPCCTKVTSEHLSLILGNILKIINNNLGIDEASWMKRIAVYAQPIISKARPDLLRSHFIPTLEKLKKKAVKTVQEEEQLKTDGKGDTQEAELLILDEFAVLCRDLYAFYPMLIRYVDNNRSNWLKSPDPDSDQLFRMVAEVFILWCKSHNFKREEQNFVIQNEINNLAFLTGDSKSKMSKSGGQDQERKKTKRRGDLYSIQTSLIVAALKKMLPIGLNMCTPGDQELISLAKSRYSCRDTDEEVKEHLRNNLHLQEKSDDPAVKWQLNLYKDVLRNDEPSNPEKTVERVQSISAALFHLEQVEQPLRSKKAVWHKLLSKQRKRAVVACFRMAPLYNLPRHRSINLFLHGYQRFWIETEAHFFEEKLVQDLAKSPRVEDEEEEETERQPDPLHQIILHFSRNALTERSKLEDDPLYTSYSSMMAKSCQSGEDEEEEEDKEKTFEEKEMEKQKTLYQQARLHERGAAEMVLQMISASKGEMSPMVVETLKLGIAILNGGNAGVQQKMLDYLKEKKDAGFFQSLSGLMQSCSVLDLNAFERQNKAEGLGMVTEEGTLIVRERGEKVLQNDEFTQDLFRFLQLLCEGHNSDFQNFLRTQMGNTTTVNIIISTVDYLLRLQESISDFYWYYSGKDIIDESGQHNFSKALAVTKQIFNSLTEYIQGPCIGNQQSLAHSRLWDAVVGFLHVFANMQMKLSQDSSQIELLKELLDLLQDMVVMLLSLLEGNVVNGTIGKQMVDTLVESSTNVEMILKFFDMFLKLKDLTSSDTFKEYDPDGKGIISRKEFQKAMEGLKQYTQSEIDFLLSCTEADENDMFNYVDFVERFHEPAKDIGFNVAVLLTNLSEHMPNDSRLKSLLDPAESVLNYFEPYLGRIEIMGGAKKIERVYFEISESSRTQWEKPQVKESKRQFIFDVVNEGGEQEKMELFVNFCEDTIFEMQLASQISESDSTDRPEEEEEEDEDSAYSIETEGEEEEKSFESASAFTMACVSVKRNVTKFLKRATLKNLRKQYRNVKKMSAKELVKVFFSFFWMLFVGLFQLLFTIFGGIFQILWNTVFGGGLVEGAKNIRVTKILGDMPDPTQFGIHDDVIETDRAEVTEPGVTTELVHFVKGEAGDTDIMSDLFGIHSKKEGGLKQGPEVGLGDLSEIIGKDEPPTLESTVRKKRKAQAAEMKAVHEAEGKAESEKADMEDREKEDKIKEEGQTDYLWADVTVKKTRRRGQKAEKPEAFMANFFKGLEIYQTKLLHYLARNFYNLRFLALFVAFAINFILLFYKVTEEPLEEETEDVANLWNSFNDDDEEEAMVFFVLQESTGYMAPTLRALAIVHTIISLVCVVGYYCLKVPLVVFKREKEIARKLEFDGLYITEQPSEDDIKGQWDRLVINTPSFPNNYWDKFVKRKVINKYGDLYGAERIAELLGLDKNALDFSPVEEAKAEAASLVSWLSSIDMKYHIWKLGVVFTDNSFLYLAWYTTMSVLGHYNNFFFAAHLLDIAMGFKTLRTILSSVTHNGKQLVLTVGLLAVVVYLYTVVAFNFFRKFYNKSEDDDEPDMKCDDMMTCYLFHMYVGVRAGGGIGDEIEDPAGDPYEMYRIVFDITFFFFVIVILLAIIQGLIIDAFGELRDQQEQVREDMETKCFICGIGNDYFDTTPHGFETHTLQEHNLANYLFFLMYLINKDETEHTGQESYVWKMYQERCWDFFPAGDCFRKQYEDQLG</sequence>
<proteinExistence type="evidence at protein level"/>